<evidence type="ECO:0000255" key="1"/>
<evidence type="ECO:0000255" key="2">
    <source>
        <dbReference type="PROSITE-ProRule" id="PRU00153"/>
    </source>
</evidence>
<evidence type="ECO:0000305" key="3"/>
<organism>
    <name type="scientific">Caenorhabditis elegans</name>
    <dbReference type="NCBI Taxonomy" id="6239"/>
    <lineage>
        <taxon>Eukaryota</taxon>
        <taxon>Metazoa</taxon>
        <taxon>Ecdysozoa</taxon>
        <taxon>Nematoda</taxon>
        <taxon>Chromadorea</taxon>
        <taxon>Rhabditida</taxon>
        <taxon>Rhabditina</taxon>
        <taxon>Rhabditomorpha</taxon>
        <taxon>Rhabditoidea</taxon>
        <taxon>Rhabditidae</taxon>
        <taxon>Peloderinae</taxon>
        <taxon>Caenorhabditis</taxon>
    </lineage>
</organism>
<protein>
    <recommendedName>
        <fullName>Probable phospholipase D F09G2.8</fullName>
        <ecNumber>3.1.4.4</ecNumber>
    </recommendedName>
    <alternativeName>
        <fullName>Choline phosphatase F09G2.8</fullName>
    </alternativeName>
    <alternativeName>
        <fullName>Phosphatidylcholine-hydrolyzing phospholipase D F09G2.8</fullName>
    </alternativeName>
</protein>
<reference key="1">
    <citation type="journal article" date="1998" name="Science">
        <title>Genome sequence of the nematode C. elegans: a platform for investigating biology.</title>
        <authorList>
            <consortium name="The C. elegans sequencing consortium"/>
        </authorList>
    </citation>
    <scope>NUCLEOTIDE SEQUENCE [LARGE SCALE GENOMIC DNA]</scope>
    <scope>ALTERNATIVE SPLICING</scope>
    <source>
        <strain>Bristol N2</strain>
    </source>
</reference>
<reference key="2">
    <citation type="journal article" date="2003" name="Nat. Biotechnol.">
        <title>Lectin affinity capture, isotope-coded tagging and mass spectrometry to identify N-linked glycoproteins.</title>
        <authorList>
            <person name="Kaji H."/>
            <person name="Saito H."/>
            <person name="Yamauchi Y."/>
            <person name="Shinkawa T."/>
            <person name="Taoka M."/>
            <person name="Hirabayashi J."/>
            <person name="Kasai K."/>
            <person name="Takahashi N."/>
            <person name="Isobe T."/>
        </authorList>
    </citation>
    <scope>GLYCOSYLATION [LARGE SCALE ANALYSIS] AT ASN-333</scope>
    <scope>IDENTIFICATION BY MASS SPECTROMETRY</scope>
    <source>
        <strain>Bristol N2</strain>
    </source>
</reference>
<reference key="3">
    <citation type="journal article" date="2007" name="Mol. Cell. Proteomics">
        <title>Proteomics reveals N-linked glycoprotein diversity in Caenorhabditis elegans and suggests an atypical translocation mechanism for integral membrane proteins.</title>
        <authorList>
            <person name="Kaji H."/>
            <person name="Kamiie J."/>
            <person name="Kawakami H."/>
            <person name="Kido K."/>
            <person name="Yamauchi Y."/>
            <person name="Shinkawa T."/>
            <person name="Taoka M."/>
            <person name="Takahashi N."/>
            <person name="Isobe T."/>
        </authorList>
    </citation>
    <scope>GLYCOSYLATION [LARGE SCALE ANALYSIS] AT ASN-333 AND ASN-350</scope>
    <scope>IDENTIFICATION BY MASS SPECTROMETRY</scope>
    <source>
        <strain>Bristol N2</strain>
    </source>
</reference>
<gene>
    <name type="ORF">F09G2.8</name>
</gene>
<dbReference type="EC" id="3.1.4.4"/>
<dbReference type="EMBL" id="FO080529">
    <property type="protein sequence ID" value="CCD64428.1"/>
    <property type="molecule type" value="Genomic_DNA"/>
</dbReference>
<dbReference type="EMBL" id="FO080529">
    <property type="protein sequence ID" value="CCD64430.1"/>
    <property type="molecule type" value="Genomic_DNA"/>
</dbReference>
<dbReference type="PIR" id="T32489">
    <property type="entry name" value="T32489"/>
</dbReference>
<dbReference type="RefSeq" id="NP_001122905.1">
    <molecule id="O17405-1"/>
    <property type="nucleotide sequence ID" value="NM_001129433.6"/>
</dbReference>
<dbReference type="RefSeq" id="NP_001256080.1">
    <molecule id="O17405-2"/>
    <property type="nucleotide sequence ID" value="NM_001269151.3"/>
</dbReference>
<dbReference type="SMR" id="O17405"/>
<dbReference type="BioGRID" id="44150">
    <property type="interactions" value="2"/>
</dbReference>
<dbReference type="FunCoup" id="O17405">
    <property type="interactions" value="464"/>
</dbReference>
<dbReference type="STRING" id="6239.F09G2.8b.1"/>
<dbReference type="PaxDb" id="6239-F09G2.8b"/>
<dbReference type="PeptideAtlas" id="O17405"/>
<dbReference type="EnsemblMetazoa" id="F09G2.8a.1">
    <molecule id="O17405-2"/>
    <property type="protein sequence ID" value="F09G2.8a.1"/>
    <property type="gene ID" value="WBGene00017316"/>
</dbReference>
<dbReference type="EnsemblMetazoa" id="F09G2.8b.1">
    <molecule id="O17405-1"/>
    <property type="protein sequence ID" value="F09G2.8b.1"/>
    <property type="gene ID" value="WBGene00017316"/>
</dbReference>
<dbReference type="GeneID" id="179105"/>
<dbReference type="KEGG" id="cel:CELE_F09G2.8"/>
<dbReference type="UCSC" id="F09G2.8b">
    <molecule id="O17405-1"/>
    <property type="organism name" value="c. elegans"/>
</dbReference>
<dbReference type="AGR" id="WB:WBGene00017316"/>
<dbReference type="CTD" id="179105"/>
<dbReference type="WormBase" id="F09G2.8a">
    <molecule id="O17405-2"/>
    <property type="protein sequence ID" value="CE09303"/>
    <property type="gene ID" value="WBGene00017316"/>
</dbReference>
<dbReference type="WormBase" id="F09G2.8b">
    <molecule id="O17405-1"/>
    <property type="protein sequence ID" value="CE41221"/>
    <property type="gene ID" value="WBGene00017316"/>
</dbReference>
<dbReference type="eggNOG" id="KOG3603">
    <property type="taxonomic scope" value="Eukaryota"/>
</dbReference>
<dbReference type="GeneTree" id="ENSGT00950000183059"/>
<dbReference type="InParanoid" id="O17405"/>
<dbReference type="OMA" id="VASFYWN"/>
<dbReference type="OrthoDB" id="1923775at2759"/>
<dbReference type="PhylomeDB" id="O17405"/>
<dbReference type="Reactome" id="R-CEL-1855204">
    <property type="pathway name" value="Synthesis of IP3 and IP4 in the cytosol"/>
</dbReference>
<dbReference type="Reactome" id="R-CEL-2029485">
    <property type="pathway name" value="Role of phospholipids in phagocytosis"/>
</dbReference>
<dbReference type="PRO" id="PR:O17405"/>
<dbReference type="Proteomes" id="UP000001940">
    <property type="component" value="Chromosome V"/>
</dbReference>
<dbReference type="Bgee" id="WBGene00017316">
    <property type="expression patterns" value="Expressed in adult organism and 4 other cell types or tissues"/>
</dbReference>
<dbReference type="GO" id="GO:0016020">
    <property type="term" value="C:membrane"/>
    <property type="evidence" value="ECO:0007669"/>
    <property type="project" value="UniProtKB-SubCell"/>
</dbReference>
<dbReference type="GO" id="GO:0004630">
    <property type="term" value="F:phospholipase D activity"/>
    <property type="evidence" value="ECO:0007669"/>
    <property type="project" value="UniProtKB-EC"/>
</dbReference>
<dbReference type="GO" id="GO:0016042">
    <property type="term" value="P:lipid catabolic process"/>
    <property type="evidence" value="ECO:0007669"/>
    <property type="project" value="UniProtKB-KW"/>
</dbReference>
<dbReference type="CDD" id="cd09106">
    <property type="entry name" value="PLDc_vPLD3_4_5_like_1"/>
    <property type="match status" value="1"/>
</dbReference>
<dbReference type="CDD" id="cd09107">
    <property type="entry name" value="PLDc_vPLD3_4_5_like_2"/>
    <property type="match status" value="1"/>
</dbReference>
<dbReference type="Gene3D" id="3.30.870.10">
    <property type="entry name" value="Endonuclease Chain A"/>
    <property type="match status" value="2"/>
</dbReference>
<dbReference type="InterPro" id="IPR050874">
    <property type="entry name" value="Diverse_PLD-related"/>
</dbReference>
<dbReference type="InterPro" id="IPR032803">
    <property type="entry name" value="PLDc_3"/>
</dbReference>
<dbReference type="InterPro" id="IPR001736">
    <property type="entry name" value="PLipase_D/transphosphatidylase"/>
</dbReference>
<dbReference type="PANTHER" id="PTHR10185:SF17">
    <property type="entry name" value="GM01519P-RELATED"/>
    <property type="match status" value="1"/>
</dbReference>
<dbReference type="PANTHER" id="PTHR10185">
    <property type="entry name" value="PHOSPHOLIPASE D - RELATED"/>
    <property type="match status" value="1"/>
</dbReference>
<dbReference type="Pfam" id="PF13918">
    <property type="entry name" value="PLDc_3"/>
    <property type="match status" value="1"/>
</dbReference>
<dbReference type="SMART" id="SM00155">
    <property type="entry name" value="PLDc"/>
    <property type="match status" value="2"/>
</dbReference>
<dbReference type="SUPFAM" id="SSF56024">
    <property type="entry name" value="Phospholipase D/nuclease"/>
    <property type="match status" value="2"/>
</dbReference>
<dbReference type="PROSITE" id="PS50035">
    <property type="entry name" value="PLD"/>
    <property type="match status" value="2"/>
</dbReference>
<keyword id="KW-0025">Alternative splicing</keyword>
<keyword id="KW-0325">Glycoprotein</keyword>
<keyword id="KW-0378">Hydrolase</keyword>
<keyword id="KW-0442">Lipid degradation</keyword>
<keyword id="KW-0443">Lipid metabolism</keyword>
<keyword id="KW-0472">Membrane</keyword>
<keyword id="KW-1185">Reference proteome</keyword>
<keyword id="KW-0677">Repeat</keyword>
<keyword id="KW-0735">Signal-anchor</keyword>
<keyword id="KW-0812">Transmembrane</keyword>
<keyword id="KW-1133">Transmembrane helix</keyword>
<sequence length="554" mass="63216">MPLRLINFRQQRRCRQSPSVARLESIVLNRRELLLDHFQYSLFQNSSEIPMTTILINDRPMRHTHDGRADMTNFEMDLFDTRIEVPTSKNSGGDGMHSPYYDEESSKKRCCKCGNSRNRIIKPACVPISIVSLFIIALVFLPLFNEEDLASPIKLTTGCSVDCKTFLVESIPIGLPFKTNNHTAEAWINIIDNSKQYLDISVMYWNLNTSDYKSSVYGRRVYEAIIRAGKRGVKIRIAQDGASNLSDNKESAYLVQEGLAEVREINVTRLIGSGIIHTKFILSDIATLYIGSANMDWKSLSEVKEVGVVFQECPCVASDLYKIFAAYWKLGENDSVIPEKWPISYRTPFNFSSMAKLTMDGEPAEYFISSSPGPFNPKGREHDLAAIQKIMKDARKSVCISVMDYIPSTLYMKKSNRFWPEIDDSIRDAAYRGVNVRMLISHWDHSRKEMIPFLKSLQTITDGLPRYNRTEHGQVQVRIFTVPPNGKEKIPFTRVNHAKYMVTEDIAYIGTSNWSGDYFISTAGVAMVVRQPSATKRLQNVFDRDWNSEYSKDL</sequence>
<comment type="catalytic activity">
    <reaction>
        <text>a 1,2-diacyl-sn-glycero-3-phosphocholine + H2O = a 1,2-diacyl-sn-glycero-3-phosphate + choline + H(+)</text>
        <dbReference type="Rhea" id="RHEA:14445"/>
        <dbReference type="ChEBI" id="CHEBI:15354"/>
        <dbReference type="ChEBI" id="CHEBI:15377"/>
        <dbReference type="ChEBI" id="CHEBI:15378"/>
        <dbReference type="ChEBI" id="CHEBI:57643"/>
        <dbReference type="ChEBI" id="CHEBI:58608"/>
        <dbReference type="EC" id="3.1.4.4"/>
    </reaction>
</comment>
<comment type="subcellular location">
    <subcellularLocation>
        <location evidence="3">Membrane</location>
        <topology evidence="3">Single-pass type II membrane protein</topology>
    </subcellularLocation>
</comment>
<comment type="alternative products">
    <event type="alternative splicing"/>
    <isoform>
        <id>O17405-1</id>
        <name>b</name>
        <sequence type="displayed"/>
    </isoform>
    <isoform>
        <id>O17405-2</id>
        <name>a</name>
        <sequence type="described" ref="VSP_042409 VSP_042410"/>
    </isoform>
</comment>
<comment type="similarity">
    <text evidence="3">Belongs to the phospholipase D family.</text>
</comment>
<accession>O17405</accession>
<accession>G4RZL0</accession>
<accession>G8JY27</accession>
<proteinExistence type="evidence at protein level"/>
<feature type="chain" id="PRO_0000250583" description="Probable phospholipase D F09G2.8">
    <location>
        <begin position="1"/>
        <end position="554"/>
    </location>
</feature>
<feature type="topological domain" description="Cytoplasmic" evidence="1">
    <location>
        <begin position="1"/>
        <end position="123"/>
    </location>
</feature>
<feature type="transmembrane region" description="Helical; Signal-anchor for type II membrane protein" evidence="1">
    <location>
        <begin position="124"/>
        <end position="144"/>
    </location>
</feature>
<feature type="topological domain" description="Extracellular" evidence="1">
    <location>
        <begin position="145"/>
        <end position="554"/>
    </location>
</feature>
<feature type="domain" description="PLD phosphodiesterase 1" evidence="2">
    <location>
        <begin position="272"/>
        <end position="299"/>
    </location>
</feature>
<feature type="domain" description="PLD phosphodiesterase 2" evidence="2">
    <location>
        <begin position="492"/>
        <end position="518"/>
    </location>
</feature>
<feature type="active site" evidence="2">
    <location>
        <position position="277"/>
    </location>
</feature>
<feature type="active site" evidence="2">
    <location>
        <position position="279"/>
    </location>
</feature>
<feature type="active site" evidence="2">
    <location>
        <position position="284"/>
    </location>
</feature>
<feature type="glycosylation site" description="N-linked (GlcNAc...) asparagine" evidence="1">
    <location>
        <position position="181"/>
    </location>
</feature>
<feature type="glycosylation site" description="N-linked (GlcNAc...) asparagine" evidence="1">
    <location>
        <position position="208"/>
    </location>
</feature>
<feature type="glycosylation site" description="N-linked (GlcNAc...) asparagine" evidence="1">
    <location>
        <position position="244"/>
    </location>
</feature>
<feature type="glycosylation site" description="N-linked (GlcNAc...) asparagine" evidence="1">
    <location>
        <position position="266"/>
    </location>
</feature>
<feature type="glycosylation site" description="N-linked (GlcNAc...) asparagine" evidence="1">
    <location>
        <position position="333"/>
    </location>
</feature>
<feature type="glycosylation site" description="N-linked (GlcNAc...) asparagine" evidence="1">
    <location>
        <position position="350"/>
    </location>
</feature>
<feature type="glycosylation site" description="N-linked (GlcNAc...) asparagine" evidence="1">
    <location>
        <position position="468"/>
    </location>
</feature>
<feature type="glycosylation site" description="N-linked (GlcNAc...) asparagine" evidence="1">
    <location>
        <position position="513"/>
    </location>
</feature>
<feature type="splice variant" id="VSP_042409" description="In isoform a." evidence="3">
    <original>MPLRLINFRQQRRCRQSPSVARLES</original>
    <variation>MVSGRTYLTPHEKEENGERKNTRME</variation>
    <location>
        <begin position="1"/>
        <end position="25"/>
    </location>
</feature>
<feature type="splice variant" id="VSP_042410" description="In isoform a." evidence="3">
    <location>
        <begin position="26"/>
        <end position="63"/>
    </location>
</feature>
<name>PLDL_CAEEL</name>